<gene>
    <name evidence="1" type="primary">nadK</name>
    <name type="ordered locus">PF1103</name>
</gene>
<organism>
    <name type="scientific">Pyrococcus furiosus (strain ATCC 43587 / DSM 3638 / JCM 8422 / Vc1)</name>
    <dbReference type="NCBI Taxonomy" id="186497"/>
    <lineage>
        <taxon>Archaea</taxon>
        <taxon>Methanobacteriati</taxon>
        <taxon>Methanobacteriota</taxon>
        <taxon>Thermococci</taxon>
        <taxon>Thermococcales</taxon>
        <taxon>Thermococcaceae</taxon>
        <taxon>Pyrococcus</taxon>
    </lineage>
</organism>
<dbReference type="EC" id="2.7.1.23" evidence="1"/>
<dbReference type="EMBL" id="AE009950">
    <property type="protein sequence ID" value="AAL81227.1"/>
    <property type="molecule type" value="Genomic_DNA"/>
</dbReference>
<dbReference type="RefSeq" id="WP_011012242.1">
    <property type="nucleotide sequence ID" value="NZ_CP023154.1"/>
</dbReference>
<dbReference type="SMR" id="Q8U1V2"/>
<dbReference type="STRING" id="186497.PF1103"/>
<dbReference type="PaxDb" id="186497-PF1103"/>
<dbReference type="KEGG" id="pfu:PF1103"/>
<dbReference type="PATRIC" id="fig|186497.12.peg.1163"/>
<dbReference type="eggNOG" id="arCOG01348">
    <property type="taxonomic scope" value="Archaea"/>
</dbReference>
<dbReference type="HOGENOM" id="CLU_008831_0_1_2"/>
<dbReference type="OrthoDB" id="77798at2157"/>
<dbReference type="PhylomeDB" id="Q8U1V2"/>
<dbReference type="Proteomes" id="UP000001013">
    <property type="component" value="Chromosome"/>
</dbReference>
<dbReference type="GO" id="GO:0005737">
    <property type="term" value="C:cytoplasm"/>
    <property type="evidence" value="ECO:0007669"/>
    <property type="project" value="UniProtKB-SubCell"/>
</dbReference>
<dbReference type="GO" id="GO:0005524">
    <property type="term" value="F:ATP binding"/>
    <property type="evidence" value="ECO:0007669"/>
    <property type="project" value="UniProtKB-KW"/>
</dbReference>
<dbReference type="GO" id="GO:0046872">
    <property type="term" value="F:metal ion binding"/>
    <property type="evidence" value="ECO:0007669"/>
    <property type="project" value="UniProtKB-UniRule"/>
</dbReference>
<dbReference type="GO" id="GO:0003951">
    <property type="term" value="F:NAD+ kinase activity"/>
    <property type="evidence" value="ECO:0007669"/>
    <property type="project" value="UniProtKB-UniRule"/>
</dbReference>
<dbReference type="GO" id="GO:0019674">
    <property type="term" value="P:NAD metabolic process"/>
    <property type="evidence" value="ECO:0007669"/>
    <property type="project" value="InterPro"/>
</dbReference>
<dbReference type="GO" id="GO:0006741">
    <property type="term" value="P:NADP biosynthetic process"/>
    <property type="evidence" value="ECO:0007669"/>
    <property type="project" value="UniProtKB-UniRule"/>
</dbReference>
<dbReference type="Gene3D" id="3.40.50.10330">
    <property type="entry name" value="Probable inorganic polyphosphate/atp-NAD kinase, domain 1"/>
    <property type="match status" value="1"/>
</dbReference>
<dbReference type="Gene3D" id="2.60.200.30">
    <property type="entry name" value="Probable inorganic polyphosphate/atp-NAD kinase, domain 2"/>
    <property type="match status" value="1"/>
</dbReference>
<dbReference type="HAMAP" id="MF_00361">
    <property type="entry name" value="NAD_kinase"/>
    <property type="match status" value="1"/>
</dbReference>
<dbReference type="InterPro" id="IPR017438">
    <property type="entry name" value="ATP-NAD_kinase_N"/>
</dbReference>
<dbReference type="InterPro" id="IPR017437">
    <property type="entry name" value="ATP-NAD_kinase_PpnK-typ_C"/>
</dbReference>
<dbReference type="InterPro" id="IPR016064">
    <property type="entry name" value="NAD/diacylglycerol_kinase_sf"/>
</dbReference>
<dbReference type="InterPro" id="IPR002504">
    <property type="entry name" value="NADK"/>
</dbReference>
<dbReference type="NCBIfam" id="NF002984">
    <property type="entry name" value="PRK03708.1"/>
    <property type="match status" value="1"/>
</dbReference>
<dbReference type="PANTHER" id="PTHR20275:SF43">
    <property type="entry name" value="BIFUNCTIONAL NADP PHOSPHATASE_NAD KINASE"/>
    <property type="match status" value="1"/>
</dbReference>
<dbReference type="PANTHER" id="PTHR20275">
    <property type="entry name" value="NAD KINASE"/>
    <property type="match status" value="1"/>
</dbReference>
<dbReference type="Pfam" id="PF01513">
    <property type="entry name" value="NAD_kinase"/>
    <property type="match status" value="1"/>
</dbReference>
<dbReference type="Pfam" id="PF20143">
    <property type="entry name" value="NAD_kinase_C"/>
    <property type="match status" value="1"/>
</dbReference>
<dbReference type="SUPFAM" id="SSF111331">
    <property type="entry name" value="NAD kinase/diacylglycerol kinase-like"/>
    <property type="match status" value="1"/>
</dbReference>
<accession>Q8U1V2</accession>
<protein>
    <recommendedName>
        <fullName evidence="1">NAD kinase</fullName>
        <ecNumber evidence="1">2.7.1.23</ecNumber>
    </recommendedName>
    <alternativeName>
        <fullName evidence="1">ATP-dependent NAD kinase</fullName>
    </alternativeName>
</protein>
<proteinExistence type="inferred from homology"/>
<reference key="1">
    <citation type="journal article" date="1999" name="Genetics">
        <title>Divergence of the hyperthermophilic archaea Pyrococcus furiosus and P. horikoshii inferred from complete genomic sequences.</title>
        <authorList>
            <person name="Maeder D.L."/>
            <person name="Weiss R.B."/>
            <person name="Dunn D.M."/>
            <person name="Cherry J.L."/>
            <person name="Gonzalez J.M."/>
            <person name="DiRuggiero J."/>
            <person name="Robb F.T."/>
        </authorList>
    </citation>
    <scope>NUCLEOTIDE SEQUENCE [LARGE SCALE GENOMIC DNA]</scope>
    <source>
        <strain>ATCC 43587 / DSM 3638 / JCM 8422 / Vc1</strain>
    </source>
</reference>
<evidence type="ECO:0000255" key="1">
    <source>
        <dbReference type="HAMAP-Rule" id="MF_00361"/>
    </source>
</evidence>
<comment type="function">
    <text evidence="1">Involved in the regulation of the intracellular balance of NAD and NADP, and is a key enzyme in the biosynthesis of NADP. Catalyzes specifically the phosphorylation on 2'-hydroxyl of the adenosine moiety of NAD to yield NADP.</text>
</comment>
<comment type="catalytic activity">
    <reaction evidence="1">
        <text>NAD(+) + ATP = ADP + NADP(+) + H(+)</text>
        <dbReference type="Rhea" id="RHEA:18629"/>
        <dbReference type="ChEBI" id="CHEBI:15378"/>
        <dbReference type="ChEBI" id="CHEBI:30616"/>
        <dbReference type="ChEBI" id="CHEBI:57540"/>
        <dbReference type="ChEBI" id="CHEBI:58349"/>
        <dbReference type="ChEBI" id="CHEBI:456216"/>
        <dbReference type="EC" id="2.7.1.23"/>
    </reaction>
</comment>
<comment type="cofactor">
    <cofactor evidence="1">
        <name>a divalent metal cation</name>
        <dbReference type="ChEBI" id="CHEBI:60240"/>
    </cofactor>
</comment>
<comment type="subcellular location">
    <subcellularLocation>
        <location evidence="1">Cytoplasm</location>
    </subcellularLocation>
</comment>
<comment type="similarity">
    <text evidence="1">Belongs to the NAD kinase family.</text>
</comment>
<feature type="chain" id="PRO_0000120706" description="NAD kinase">
    <location>
        <begin position="1"/>
        <end position="277"/>
    </location>
</feature>
<feature type="active site" description="Proton acceptor" evidence="1">
    <location>
        <position position="67"/>
    </location>
</feature>
<feature type="binding site" evidence="1">
    <location>
        <begin position="67"/>
        <end position="68"/>
    </location>
    <ligand>
        <name>NAD(+)</name>
        <dbReference type="ChEBI" id="CHEBI:57540"/>
    </ligand>
</feature>
<feature type="binding site" evidence="1">
    <location>
        <position position="72"/>
    </location>
    <ligand>
        <name>NAD(+)</name>
        <dbReference type="ChEBI" id="CHEBI:57540"/>
    </ligand>
</feature>
<feature type="binding site" evidence="1">
    <location>
        <begin position="137"/>
        <end position="138"/>
    </location>
    <ligand>
        <name>NAD(+)</name>
        <dbReference type="ChEBI" id="CHEBI:57540"/>
    </ligand>
</feature>
<feature type="binding site" evidence="1">
    <location>
        <position position="148"/>
    </location>
    <ligand>
        <name>NAD(+)</name>
        <dbReference type="ChEBI" id="CHEBI:57540"/>
    </ligand>
</feature>
<feature type="binding site" evidence="1">
    <location>
        <position position="165"/>
    </location>
    <ligand>
        <name>NAD(+)</name>
        <dbReference type="ChEBI" id="CHEBI:57540"/>
    </ligand>
</feature>
<feature type="binding site" evidence="1">
    <location>
        <position position="167"/>
    </location>
    <ligand>
        <name>NAD(+)</name>
        <dbReference type="ChEBI" id="CHEBI:57540"/>
    </ligand>
</feature>
<feature type="binding site" evidence="1">
    <location>
        <begin position="178"/>
        <end position="183"/>
    </location>
    <ligand>
        <name>NAD(+)</name>
        <dbReference type="ChEBI" id="CHEBI:57540"/>
    </ligand>
</feature>
<feature type="binding site" evidence="1">
    <location>
        <position position="202"/>
    </location>
    <ligand>
        <name>NAD(+)</name>
        <dbReference type="ChEBI" id="CHEBI:57540"/>
    </ligand>
</feature>
<feature type="binding site" evidence="1">
    <location>
        <position position="236"/>
    </location>
    <ligand>
        <name>NAD(+)</name>
        <dbReference type="ChEBI" id="CHEBI:57540"/>
    </ligand>
</feature>
<sequence length="277" mass="31275">MKFGIVARRDKEEALKLAYRVYDFLKVSGYDVVVDKDTYEHFPYFNERDVIPLEEFDVDFIIAIGGDGTILRIEHMTKKDIPILSVNMGTLGFLTEVEPSDTFFALSRLIEGEYYIDERIKVRTYINGENRVPDALNEVAILTGIPGKIIHLKYYVDGGLADEVRADGLVVSTPTGSTGYAMSAGGPFVDPRLDVILVVPLLPLPKTSVPMVIPGSSRVDITLVSDREIILAIDGQYYEYLPPDVEITVVKSPRKTKFVRFTKEIYPKYTMKIKERH</sequence>
<keyword id="KW-0067">ATP-binding</keyword>
<keyword id="KW-0963">Cytoplasm</keyword>
<keyword id="KW-0418">Kinase</keyword>
<keyword id="KW-0520">NAD</keyword>
<keyword id="KW-0521">NADP</keyword>
<keyword id="KW-0547">Nucleotide-binding</keyword>
<keyword id="KW-1185">Reference proteome</keyword>
<keyword id="KW-0808">Transferase</keyword>
<name>NADK_PYRFU</name>